<name>LOR12_ARATH</name>
<dbReference type="EMBL" id="AB017071">
    <property type="protein sequence ID" value="BAB02312.1"/>
    <property type="molecule type" value="Genomic_DNA"/>
</dbReference>
<dbReference type="EMBL" id="CP002686">
    <property type="protein sequence ID" value="AEE75729.1"/>
    <property type="molecule type" value="Genomic_DNA"/>
</dbReference>
<dbReference type="EMBL" id="AY063868">
    <property type="protein sequence ID" value="AAL36224.1"/>
    <property type="molecule type" value="mRNA"/>
</dbReference>
<dbReference type="EMBL" id="AY091222">
    <property type="protein sequence ID" value="AAM14161.1"/>
    <property type="molecule type" value="mRNA"/>
</dbReference>
<dbReference type="EMBL" id="AY086466">
    <property type="protein sequence ID" value="AAM63469.1"/>
    <property type="status" value="ALT_INIT"/>
    <property type="molecule type" value="mRNA"/>
</dbReference>
<dbReference type="RefSeq" id="NP_566526.1">
    <property type="nucleotide sequence ID" value="NM_112451.4"/>
</dbReference>
<dbReference type="SMR" id="Q9LVZ8"/>
<dbReference type="FunCoup" id="Q9LVZ8">
    <property type="interactions" value="164"/>
</dbReference>
<dbReference type="iPTMnet" id="Q9LVZ8"/>
<dbReference type="PaxDb" id="3702-AT3G15810.1"/>
<dbReference type="ProteomicsDB" id="238588"/>
<dbReference type="DNASU" id="820824"/>
<dbReference type="EnsemblPlants" id="AT3G15810.1">
    <property type="protein sequence ID" value="AT3G15810.1"/>
    <property type="gene ID" value="AT3G15810"/>
</dbReference>
<dbReference type="GeneID" id="820824"/>
<dbReference type="Gramene" id="AT3G15810.1">
    <property type="protein sequence ID" value="AT3G15810.1"/>
    <property type="gene ID" value="AT3G15810"/>
</dbReference>
<dbReference type="KEGG" id="ath:AT3G15810"/>
<dbReference type="Araport" id="AT3G15810"/>
<dbReference type="TAIR" id="AT3G15810"/>
<dbReference type="eggNOG" id="ENOG502QQV0">
    <property type="taxonomic scope" value="Eukaryota"/>
</dbReference>
<dbReference type="HOGENOM" id="CLU_063146_3_1_1"/>
<dbReference type="InParanoid" id="Q9LVZ8"/>
<dbReference type="OMA" id="DKAYLYQ"/>
<dbReference type="OrthoDB" id="677463at2759"/>
<dbReference type="PhylomeDB" id="Q9LVZ8"/>
<dbReference type="PRO" id="PR:Q9LVZ8"/>
<dbReference type="Proteomes" id="UP000006548">
    <property type="component" value="Chromosome 3"/>
</dbReference>
<dbReference type="ExpressionAtlas" id="Q9LVZ8">
    <property type="expression patterns" value="baseline and differential"/>
</dbReference>
<dbReference type="GO" id="GO:0005829">
    <property type="term" value="C:cytosol"/>
    <property type="evidence" value="ECO:0007005"/>
    <property type="project" value="TAIR"/>
</dbReference>
<dbReference type="Gene3D" id="2.40.160.200">
    <property type="entry name" value="LURP1-related"/>
    <property type="match status" value="1"/>
</dbReference>
<dbReference type="InterPro" id="IPR007612">
    <property type="entry name" value="LOR"/>
</dbReference>
<dbReference type="InterPro" id="IPR038595">
    <property type="entry name" value="LOR_sf"/>
</dbReference>
<dbReference type="InterPro" id="IPR025659">
    <property type="entry name" value="Tubby-like_C"/>
</dbReference>
<dbReference type="PANTHER" id="PTHR31087">
    <property type="match status" value="1"/>
</dbReference>
<dbReference type="PANTHER" id="PTHR31087:SF106">
    <property type="entry name" value="PROTEIN LURP-ONE-RELATED 12"/>
    <property type="match status" value="1"/>
</dbReference>
<dbReference type="Pfam" id="PF04525">
    <property type="entry name" value="LOR"/>
    <property type="match status" value="1"/>
</dbReference>
<dbReference type="SUPFAM" id="SSF54518">
    <property type="entry name" value="Tubby C-terminal domain-like"/>
    <property type="match status" value="1"/>
</dbReference>
<comment type="function">
    <text evidence="1">Might be related to the phospholipid scramblase and tubby-like superfamily of membrane tethered transcription factors.</text>
</comment>
<comment type="similarity">
    <text evidence="2">Belongs to the LOR family.</text>
</comment>
<comment type="sequence caution" evidence="2">
    <conflict type="erroneous initiation">
        <sequence resource="EMBL-CDS" id="AAM63469"/>
    </conflict>
    <text>Truncated N-terminus.</text>
</comment>
<protein>
    <recommendedName>
        <fullName>Protein LURP-one-related 12</fullName>
    </recommendedName>
</protein>
<keyword id="KW-1185">Reference proteome</keyword>
<reference key="1">
    <citation type="journal article" date="2000" name="DNA Res.">
        <title>Structural analysis of Arabidopsis thaliana chromosome 3. I. Sequence features of the regions of 4,504,864 bp covered by sixty P1 and TAC clones.</title>
        <authorList>
            <person name="Sato S."/>
            <person name="Nakamura Y."/>
            <person name="Kaneko T."/>
            <person name="Katoh T."/>
            <person name="Asamizu E."/>
            <person name="Tabata S."/>
        </authorList>
    </citation>
    <scope>NUCLEOTIDE SEQUENCE [LARGE SCALE GENOMIC DNA]</scope>
    <source>
        <strain>cv. Columbia</strain>
    </source>
</reference>
<reference key="2">
    <citation type="journal article" date="2017" name="Plant J.">
        <title>Araport11: a complete reannotation of the Arabidopsis thaliana reference genome.</title>
        <authorList>
            <person name="Cheng C.Y."/>
            <person name="Krishnakumar V."/>
            <person name="Chan A.P."/>
            <person name="Thibaud-Nissen F."/>
            <person name="Schobel S."/>
            <person name="Town C.D."/>
        </authorList>
    </citation>
    <scope>GENOME REANNOTATION</scope>
    <source>
        <strain>cv. Columbia</strain>
    </source>
</reference>
<reference key="3">
    <citation type="journal article" date="2003" name="Science">
        <title>Empirical analysis of transcriptional activity in the Arabidopsis genome.</title>
        <authorList>
            <person name="Yamada K."/>
            <person name="Lim J."/>
            <person name="Dale J.M."/>
            <person name="Chen H."/>
            <person name="Shinn P."/>
            <person name="Palm C.J."/>
            <person name="Southwick A.M."/>
            <person name="Wu H.C."/>
            <person name="Kim C.J."/>
            <person name="Nguyen M."/>
            <person name="Pham P.K."/>
            <person name="Cheuk R.F."/>
            <person name="Karlin-Newmann G."/>
            <person name="Liu S.X."/>
            <person name="Lam B."/>
            <person name="Sakano H."/>
            <person name="Wu T."/>
            <person name="Yu G."/>
            <person name="Miranda M."/>
            <person name="Quach H.L."/>
            <person name="Tripp M."/>
            <person name="Chang C.H."/>
            <person name="Lee J.M."/>
            <person name="Toriumi M.J."/>
            <person name="Chan M.M."/>
            <person name="Tang C.C."/>
            <person name="Onodera C.S."/>
            <person name="Deng J.M."/>
            <person name="Akiyama K."/>
            <person name="Ansari Y."/>
            <person name="Arakawa T."/>
            <person name="Banh J."/>
            <person name="Banno F."/>
            <person name="Bowser L."/>
            <person name="Brooks S.Y."/>
            <person name="Carninci P."/>
            <person name="Chao Q."/>
            <person name="Choy N."/>
            <person name="Enju A."/>
            <person name="Goldsmith A.D."/>
            <person name="Gurjal M."/>
            <person name="Hansen N.F."/>
            <person name="Hayashizaki Y."/>
            <person name="Johnson-Hopson C."/>
            <person name="Hsuan V.W."/>
            <person name="Iida K."/>
            <person name="Karnes M."/>
            <person name="Khan S."/>
            <person name="Koesema E."/>
            <person name="Ishida J."/>
            <person name="Jiang P.X."/>
            <person name="Jones T."/>
            <person name="Kawai J."/>
            <person name="Kamiya A."/>
            <person name="Meyers C."/>
            <person name="Nakajima M."/>
            <person name="Narusaka M."/>
            <person name="Seki M."/>
            <person name="Sakurai T."/>
            <person name="Satou M."/>
            <person name="Tamse R."/>
            <person name="Vaysberg M."/>
            <person name="Wallender E.K."/>
            <person name="Wong C."/>
            <person name="Yamamura Y."/>
            <person name="Yuan S."/>
            <person name="Shinozaki K."/>
            <person name="Davis R.W."/>
            <person name="Theologis A."/>
            <person name="Ecker J.R."/>
        </authorList>
    </citation>
    <scope>NUCLEOTIDE SEQUENCE [LARGE SCALE MRNA]</scope>
    <source>
        <strain>cv. Columbia</strain>
    </source>
</reference>
<reference key="4">
    <citation type="submission" date="2002-03" db="EMBL/GenBank/DDBJ databases">
        <title>Full-length cDNA from Arabidopsis thaliana.</title>
        <authorList>
            <person name="Brover V.V."/>
            <person name="Troukhan M.E."/>
            <person name="Alexandrov N.A."/>
            <person name="Lu Y.-P."/>
            <person name="Flavell R.B."/>
            <person name="Feldmann K.A."/>
        </authorList>
    </citation>
    <scope>NUCLEOTIDE SEQUENCE [LARGE SCALE MRNA]</scope>
</reference>
<feature type="chain" id="PRO_0000399244" description="Protein LURP-one-related 12">
    <location>
        <begin position="1"/>
        <end position="220"/>
    </location>
</feature>
<organism>
    <name type="scientific">Arabidopsis thaliana</name>
    <name type="common">Mouse-ear cress</name>
    <dbReference type="NCBI Taxonomy" id="3702"/>
    <lineage>
        <taxon>Eukaryota</taxon>
        <taxon>Viridiplantae</taxon>
        <taxon>Streptophyta</taxon>
        <taxon>Embryophyta</taxon>
        <taxon>Tracheophyta</taxon>
        <taxon>Spermatophyta</taxon>
        <taxon>Magnoliopsida</taxon>
        <taxon>eudicotyledons</taxon>
        <taxon>Gunneridae</taxon>
        <taxon>Pentapetalae</taxon>
        <taxon>rosids</taxon>
        <taxon>malvids</taxon>
        <taxon>Brassicales</taxon>
        <taxon>Brassicaceae</taxon>
        <taxon>Camelineae</taxon>
        <taxon>Arabidopsis</taxon>
    </lineage>
</organism>
<gene>
    <name type="ordered locus">At3g15810</name>
    <name type="ORF">MSJ11.21</name>
</gene>
<proteinExistence type="evidence at transcript level"/>
<sequence>MELVEETIPKEGKKMGERIVVDKAYLYQEDKPLTVCKTSLFYTGDGFAAYDCRGDIIFRVDSYGPDTRDNDEIVLMDATGKCLLTVKRKRPTLHQRWEGFLGERSEGQKPIFSVRRSSIIGRCTMEVEVYDGTGEEYIIDGDFSQRSCLIYDTKKCTVAEIKRKVDASTNVMLGRDVFTLEIKPGFDGAFAMGLVVVLDQINGDDPVEIGDEQVHPFVED</sequence>
<accession>Q9LVZ8</accession>
<accession>Q8LCQ1</accession>
<evidence type="ECO:0000250" key="1"/>
<evidence type="ECO:0000305" key="2"/>